<comment type="subcellular location">
    <subcellularLocation>
        <location evidence="1">Membrane</location>
        <topology evidence="1">Multi-pass membrane protein</topology>
    </subcellularLocation>
</comment>
<comment type="similarity">
    <text evidence="4">Belongs to the multi antimicrobial extrusion (MATE) (TC 2.A.66.1) family.</text>
</comment>
<proteinExistence type="evidence at transcript level"/>
<dbReference type="EMBL" id="AY082796">
    <property type="protein sequence ID" value="AAM03451.1"/>
    <property type="molecule type" value="mRNA"/>
</dbReference>
<dbReference type="EMBL" id="AL031018">
    <property type="protein sequence ID" value="CAA19819.1"/>
    <property type="molecule type" value="Genomic_DNA"/>
</dbReference>
<dbReference type="EMBL" id="AL161558">
    <property type="protein sequence ID" value="CAB79258.1"/>
    <property type="molecule type" value="Genomic_DNA"/>
</dbReference>
<dbReference type="EMBL" id="CP002687">
    <property type="protein sequence ID" value="AEE84697.1"/>
    <property type="molecule type" value="Genomic_DNA"/>
</dbReference>
<dbReference type="PIR" id="T05135">
    <property type="entry name" value="T05135"/>
</dbReference>
<dbReference type="RefSeq" id="NP_194034.1">
    <property type="nucleotide sequence ID" value="NM_118432.2"/>
</dbReference>
<dbReference type="SMR" id="O82752"/>
<dbReference type="FunCoup" id="O82752">
    <property type="interactions" value="8"/>
</dbReference>
<dbReference type="IntAct" id="O82752">
    <property type="interactions" value="11"/>
</dbReference>
<dbReference type="STRING" id="3702.O82752"/>
<dbReference type="PaxDb" id="3702-AT4G23030.1"/>
<dbReference type="EnsemblPlants" id="AT4G23030.1">
    <property type="protein sequence ID" value="AT4G23030.1"/>
    <property type="gene ID" value="AT4G23030"/>
</dbReference>
<dbReference type="GeneID" id="828402"/>
<dbReference type="Gramene" id="AT4G23030.1">
    <property type="protein sequence ID" value="AT4G23030.1"/>
    <property type="gene ID" value="AT4G23030"/>
</dbReference>
<dbReference type="KEGG" id="ath:AT4G23030"/>
<dbReference type="Araport" id="AT4G23030"/>
<dbReference type="TAIR" id="AT4G23030"/>
<dbReference type="eggNOG" id="KOG1347">
    <property type="taxonomic scope" value="Eukaryota"/>
</dbReference>
<dbReference type="HOGENOM" id="CLU_012893_1_0_1"/>
<dbReference type="InParanoid" id="O82752"/>
<dbReference type="OMA" id="FKGLWIG"/>
<dbReference type="PhylomeDB" id="O82752"/>
<dbReference type="PRO" id="PR:O82752"/>
<dbReference type="Proteomes" id="UP000006548">
    <property type="component" value="Chromosome 4"/>
</dbReference>
<dbReference type="ExpressionAtlas" id="O82752">
    <property type="expression patterns" value="baseline and differential"/>
</dbReference>
<dbReference type="GO" id="GO:0016020">
    <property type="term" value="C:membrane"/>
    <property type="evidence" value="ECO:0007669"/>
    <property type="project" value="UniProtKB-SubCell"/>
</dbReference>
<dbReference type="GO" id="GO:0015297">
    <property type="term" value="F:antiporter activity"/>
    <property type="evidence" value="ECO:0007669"/>
    <property type="project" value="InterPro"/>
</dbReference>
<dbReference type="GO" id="GO:0042910">
    <property type="term" value="F:xenobiotic transmembrane transporter activity"/>
    <property type="evidence" value="ECO:0007669"/>
    <property type="project" value="InterPro"/>
</dbReference>
<dbReference type="GO" id="GO:1990961">
    <property type="term" value="P:xenobiotic detoxification by transmembrane export across the plasma membrane"/>
    <property type="evidence" value="ECO:0007669"/>
    <property type="project" value="InterPro"/>
</dbReference>
<dbReference type="CDD" id="cd13132">
    <property type="entry name" value="MATE_eukaryotic"/>
    <property type="match status" value="1"/>
</dbReference>
<dbReference type="InterPro" id="IPR045069">
    <property type="entry name" value="MATE_euk"/>
</dbReference>
<dbReference type="InterPro" id="IPR002528">
    <property type="entry name" value="MATE_fam"/>
</dbReference>
<dbReference type="NCBIfam" id="TIGR00797">
    <property type="entry name" value="matE"/>
    <property type="match status" value="1"/>
</dbReference>
<dbReference type="PANTHER" id="PTHR11206">
    <property type="entry name" value="MULTIDRUG RESISTANCE PROTEIN"/>
    <property type="match status" value="1"/>
</dbReference>
<dbReference type="Pfam" id="PF01554">
    <property type="entry name" value="MatE"/>
    <property type="match status" value="2"/>
</dbReference>
<gene>
    <name evidence="2" type="primary">DTX49</name>
    <name evidence="6" type="synonym">NIC1</name>
    <name evidence="5" type="ordered locus">At4g23030</name>
    <name evidence="7" type="ORF">F7H19.220</name>
</gene>
<protein>
    <recommendedName>
        <fullName evidence="2">Protein DETOXIFICATION 49</fullName>
        <shortName evidence="2">AtDTX49</shortName>
    </recommendedName>
    <alternativeName>
        <fullName evidence="4">Multidrug and toxic compound extrusion protein 49</fullName>
        <shortName evidence="4">MATE protein 49</shortName>
    </alternativeName>
    <alternativeName>
        <fullName evidence="3">Protein NOVEL ION CARRIER 1</fullName>
        <shortName evidence="3">Protein NIC1</shortName>
    </alternativeName>
</protein>
<name>DTX49_ARATH</name>
<reference key="1">
    <citation type="submission" date="2002-03" db="EMBL/GenBank/DDBJ databases">
        <title>Four membrane transport proteins of the Arabidopsis MATE-family influence the Na(+) and Li(+) tolerance in yeast.</title>
        <authorList>
            <person name="Pellengahr K."/>
            <person name="Poree F."/>
            <person name="Dolniak B."/>
            <person name="Kursawe M."/>
            <person name="Mueller-Roeber B."/>
        </authorList>
    </citation>
    <scope>NUCLEOTIDE SEQUENCE [MRNA]</scope>
</reference>
<reference key="2">
    <citation type="journal article" date="1999" name="Nature">
        <title>Sequence and analysis of chromosome 4 of the plant Arabidopsis thaliana.</title>
        <authorList>
            <person name="Mayer K.F.X."/>
            <person name="Schueller C."/>
            <person name="Wambutt R."/>
            <person name="Murphy G."/>
            <person name="Volckaert G."/>
            <person name="Pohl T."/>
            <person name="Duesterhoeft A."/>
            <person name="Stiekema W."/>
            <person name="Entian K.-D."/>
            <person name="Terryn N."/>
            <person name="Harris B."/>
            <person name="Ansorge W."/>
            <person name="Brandt P."/>
            <person name="Grivell L.A."/>
            <person name="Rieger M."/>
            <person name="Weichselgartner M."/>
            <person name="de Simone V."/>
            <person name="Obermaier B."/>
            <person name="Mache R."/>
            <person name="Mueller M."/>
            <person name="Kreis M."/>
            <person name="Delseny M."/>
            <person name="Puigdomenech P."/>
            <person name="Watson M."/>
            <person name="Schmidtheini T."/>
            <person name="Reichert B."/>
            <person name="Portetelle D."/>
            <person name="Perez-Alonso M."/>
            <person name="Boutry M."/>
            <person name="Bancroft I."/>
            <person name="Vos P."/>
            <person name="Hoheisel J."/>
            <person name="Zimmermann W."/>
            <person name="Wedler H."/>
            <person name="Ridley P."/>
            <person name="Langham S.-A."/>
            <person name="McCullagh B."/>
            <person name="Bilham L."/>
            <person name="Robben J."/>
            <person name="van der Schueren J."/>
            <person name="Grymonprez B."/>
            <person name="Chuang Y.-J."/>
            <person name="Vandenbussche F."/>
            <person name="Braeken M."/>
            <person name="Weltjens I."/>
            <person name="Voet M."/>
            <person name="Bastiaens I."/>
            <person name="Aert R."/>
            <person name="Defoor E."/>
            <person name="Weitzenegger T."/>
            <person name="Bothe G."/>
            <person name="Ramsperger U."/>
            <person name="Hilbert H."/>
            <person name="Braun M."/>
            <person name="Holzer E."/>
            <person name="Brandt A."/>
            <person name="Peters S."/>
            <person name="van Staveren M."/>
            <person name="Dirkse W."/>
            <person name="Mooijman P."/>
            <person name="Klein Lankhorst R."/>
            <person name="Rose M."/>
            <person name="Hauf J."/>
            <person name="Koetter P."/>
            <person name="Berneiser S."/>
            <person name="Hempel S."/>
            <person name="Feldpausch M."/>
            <person name="Lamberth S."/>
            <person name="Van den Daele H."/>
            <person name="De Keyser A."/>
            <person name="Buysshaert C."/>
            <person name="Gielen J."/>
            <person name="Villarroel R."/>
            <person name="De Clercq R."/>
            <person name="van Montagu M."/>
            <person name="Rogers J."/>
            <person name="Cronin A."/>
            <person name="Quail M.A."/>
            <person name="Bray-Allen S."/>
            <person name="Clark L."/>
            <person name="Doggett J."/>
            <person name="Hall S."/>
            <person name="Kay M."/>
            <person name="Lennard N."/>
            <person name="McLay K."/>
            <person name="Mayes R."/>
            <person name="Pettett A."/>
            <person name="Rajandream M.A."/>
            <person name="Lyne M."/>
            <person name="Benes V."/>
            <person name="Rechmann S."/>
            <person name="Borkova D."/>
            <person name="Bloecker H."/>
            <person name="Scharfe M."/>
            <person name="Grimm M."/>
            <person name="Loehnert T.-H."/>
            <person name="Dose S."/>
            <person name="de Haan M."/>
            <person name="Maarse A.C."/>
            <person name="Schaefer M."/>
            <person name="Mueller-Auer S."/>
            <person name="Gabel C."/>
            <person name="Fuchs M."/>
            <person name="Fartmann B."/>
            <person name="Granderath K."/>
            <person name="Dauner D."/>
            <person name="Herzl A."/>
            <person name="Neumann S."/>
            <person name="Argiriou A."/>
            <person name="Vitale D."/>
            <person name="Liguori R."/>
            <person name="Piravandi E."/>
            <person name="Massenet O."/>
            <person name="Quigley F."/>
            <person name="Clabauld G."/>
            <person name="Muendlein A."/>
            <person name="Felber R."/>
            <person name="Schnabl S."/>
            <person name="Hiller R."/>
            <person name="Schmidt W."/>
            <person name="Lecharny A."/>
            <person name="Aubourg S."/>
            <person name="Chefdor F."/>
            <person name="Cooke R."/>
            <person name="Berger C."/>
            <person name="Monfort A."/>
            <person name="Casacuberta E."/>
            <person name="Gibbons T."/>
            <person name="Weber N."/>
            <person name="Vandenbol M."/>
            <person name="Bargues M."/>
            <person name="Terol J."/>
            <person name="Torres A."/>
            <person name="Perez-Perez A."/>
            <person name="Purnelle B."/>
            <person name="Bent E."/>
            <person name="Johnson S."/>
            <person name="Tacon D."/>
            <person name="Jesse T."/>
            <person name="Heijnen L."/>
            <person name="Schwarz S."/>
            <person name="Scholler P."/>
            <person name="Heber S."/>
            <person name="Francs P."/>
            <person name="Bielke C."/>
            <person name="Frishman D."/>
            <person name="Haase D."/>
            <person name="Lemcke K."/>
            <person name="Mewes H.-W."/>
            <person name="Stocker S."/>
            <person name="Zaccaria P."/>
            <person name="Bevan M."/>
            <person name="Wilson R.K."/>
            <person name="de la Bastide M."/>
            <person name="Habermann K."/>
            <person name="Parnell L."/>
            <person name="Dedhia N."/>
            <person name="Gnoj L."/>
            <person name="Schutz K."/>
            <person name="Huang E."/>
            <person name="Spiegel L."/>
            <person name="Sekhon M."/>
            <person name="Murray J."/>
            <person name="Sheet P."/>
            <person name="Cordes M."/>
            <person name="Abu-Threideh J."/>
            <person name="Stoneking T."/>
            <person name="Kalicki J."/>
            <person name="Graves T."/>
            <person name="Harmon G."/>
            <person name="Edwards J."/>
            <person name="Latreille P."/>
            <person name="Courtney L."/>
            <person name="Cloud J."/>
            <person name="Abbott A."/>
            <person name="Scott K."/>
            <person name="Johnson D."/>
            <person name="Minx P."/>
            <person name="Bentley D."/>
            <person name="Fulton B."/>
            <person name="Miller N."/>
            <person name="Greco T."/>
            <person name="Kemp K."/>
            <person name="Kramer J."/>
            <person name="Fulton L."/>
            <person name="Mardis E."/>
            <person name="Dante M."/>
            <person name="Pepin K."/>
            <person name="Hillier L.W."/>
            <person name="Nelson J."/>
            <person name="Spieth J."/>
            <person name="Ryan E."/>
            <person name="Andrews S."/>
            <person name="Geisel C."/>
            <person name="Layman D."/>
            <person name="Du H."/>
            <person name="Ali J."/>
            <person name="Berghoff A."/>
            <person name="Jones K."/>
            <person name="Drone K."/>
            <person name="Cotton M."/>
            <person name="Joshu C."/>
            <person name="Antonoiu B."/>
            <person name="Zidanic M."/>
            <person name="Strong C."/>
            <person name="Sun H."/>
            <person name="Lamar B."/>
            <person name="Yordan C."/>
            <person name="Ma P."/>
            <person name="Zhong J."/>
            <person name="Preston R."/>
            <person name="Vil D."/>
            <person name="Shekher M."/>
            <person name="Matero A."/>
            <person name="Shah R."/>
            <person name="Swaby I.K."/>
            <person name="O'Shaughnessy A."/>
            <person name="Rodriguez M."/>
            <person name="Hoffman J."/>
            <person name="Till S."/>
            <person name="Granat S."/>
            <person name="Shohdy N."/>
            <person name="Hasegawa A."/>
            <person name="Hameed A."/>
            <person name="Lodhi M."/>
            <person name="Johnson A."/>
            <person name="Chen E."/>
            <person name="Marra M.A."/>
            <person name="Martienssen R."/>
            <person name="McCombie W.R."/>
        </authorList>
    </citation>
    <scope>NUCLEOTIDE SEQUENCE [LARGE SCALE GENOMIC DNA]</scope>
    <source>
        <strain>cv. Columbia</strain>
    </source>
</reference>
<reference key="3">
    <citation type="journal article" date="2017" name="Plant J.">
        <title>Araport11: a complete reannotation of the Arabidopsis thaliana reference genome.</title>
        <authorList>
            <person name="Cheng C.Y."/>
            <person name="Krishnakumar V."/>
            <person name="Chan A.P."/>
            <person name="Thibaud-Nissen F."/>
            <person name="Schobel S."/>
            <person name="Town C.D."/>
        </authorList>
    </citation>
    <scope>GENOME REANNOTATION</scope>
    <source>
        <strain>cv. Columbia</strain>
    </source>
</reference>
<reference key="4">
    <citation type="journal article" date="2002" name="J. Biol. Chem.">
        <title>Functional cloning and characterization of a plant efflux carrier for multidrug and heavy metal detoxification.</title>
        <authorList>
            <person name="Li L."/>
            <person name="He Z."/>
            <person name="Pandey G.K."/>
            <person name="Tsuchiya T."/>
            <person name="Luan S."/>
        </authorList>
    </citation>
    <scope>GENE FAMILY</scope>
    <scope>NOMENCLATURE</scope>
</reference>
<reference key="5">
    <citation type="journal article" date="2003" name="Eur. J. Biochem.">
        <title>The multidrug/oligosaccharidyl-lipid/polysaccharide (MOP) exporter superfamily.</title>
        <authorList>
            <person name="Hvorup R.N."/>
            <person name="Winnen B."/>
            <person name="Chang A.B."/>
            <person name="Jiang Y."/>
            <person name="Zhou X.F."/>
            <person name="Saier M.H. Jr."/>
        </authorList>
    </citation>
    <scope>GENE FAMILY</scope>
</reference>
<keyword id="KW-0472">Membrane</keyword>
<keyword id="KW-1185">Reference proteome</keyword>
<keyword id="KW-0812">Transmembrane</keyword>
<keyword id="KW-1133">Transmembrane helix</keyword>
<keyword id="KW-0813">Transport</keyword>
<sequence>MAAPLLMIIKNQTDHRQDPNPNPTHLSSSIQEAKSIAKISLPLILTGLLLYSRSMISMLFLGRLNDLSALSGGSLALGFANITGYSLLSGLSIGMEPICVQAFGAKRFKLLGLALQRTTLLLLLCSLPISILWLNIKKILLFFGQDEEISNQAEIFILFSLPDLILQSFLHPIRIYLRSQSITLPLTYSAFFAVLLHIPINYLLVSSLGLGLKGVALGAIWTNVNLLGFLIIYIVFSGVYQKTWGGFSMDCFKGWRSLMKLAIPSCVSVCLEWWWYEIMILLCGLLLNPQATVASMGILIQTTALIYIFPSSLSISVSTRVGNELGANQPDKARIAARTGLSLSLGLGLLAMFFALMVRNCWARLFTDEEEIVKLTSMVLPIIGLCELGNCPQTTLCGVLRGSARPKLGANINLCCFYFVGMPVAVWLSFFSGFDFKGLWLGLFAAQGSCLISMLVVLARTDWEVEVHRAKELMTRSCDGDEDDGNTPFLLDSLDIEENLVF</sequence>
<organism>
    <name type="scientific">Arabidopsis thaliana</name>
    <name type="common">Mouse-ear cress</name>
    <dbReference type="NCBI Taxonomy" id="3702"/>
    <lineage>
        <taxon>Eukaryota</taxon>
        <taxon>Viridiplantae</taxon>
        <taxon>Streptophyta</taxon>
        <taxon>Embryophyta</taxon>
        <taxon>Tracheophyta</taxon>
        <taxon>Spermatophyta</taxon>
        <taxon>Magnoliopsida</taxon>
        <taxon>eudicotyledons</taxon>
        <taxon>Gunneridae</taxon>
        <taxon>Pentapetalae</taxon>
        <taxon>rosids</taxon>
        <taxon>malvids</taxon>
        <taxon>Brassicales</taxon>
        <taxon>Brassicaceae</taxon>
        <taxon>Camelineae</taxon>
        <taxon>Arabidopsis</taxon>
    </lineage>
</organism>
<feature type="chain" id="PRO_0000434083" description="Protein DETOXIFICATION 49">
    <location>
        <begin position="1"/>
        <end position="502"/>
    </location>
</feature>
<feature type="transmembrane region" description="Helical" evidence="1">
    <location>
        <begin position="41"/>
        <end position="61"/>
    </location>
</feature>
<feature type="transmembrane region" description="Helical" evidence="1">
    <location>
        <begin position="75"/>
        <end position="95"/>
    </location>
</feature>
<feature type="transmembrane region" description="Helical" evidence="1">
    <location>
        <begin position="123"/>
        <end position="143"/>
    </location>
</feature>
<feature type="transmembrane region" description="Helical" evidence="1">
    <location>
        <begin position="153"/>
        <end position="173"/>
    </location>
</feature>
<feature type="transmembrane region" description="Helical" evidence="1">
    <location>
        <begin position="190"/>
        <end position="210"/>
    </location>
</feature>
<feature type="transmembrane region" description="Helical" evidence="1">
    <location>
        <begin position="216"/>
        <end position="236"/>
    </location>
</feature>
<feature type="transmembrane region" description="Helical" evidence="1">
    <location>
        <begin position="267"/>
        <end position="287"/>
    </location>
</feature>
<feature type="transmembrane region" description="Helical" evidence="1">
    <location>
        <begin position="293"/>
        <end position="313"/>
    </location>
</feature>
<feature type="transmembrane region" description="Helical" evidence="1">
    <location>
        <begin position="338"/>
        <end position="358"/>
    </location>
</feature>
<feature type="transmembrane region" description="Helical" evidence="1">
    <location>
        <begin position="372"/>
        <end position="392"/>
    </location>
</feature>
<feature type="transmembrane region" description="Helical" evidence="1">
    <location>
        <begin position="414"/>
        <end position="434"/>
    </location>
</feature>
<feature type="transmembrane region" description="Helical" evidence="1">
    <location>
        <begin position="439"/>
        <end position="459"/>
    </location>
</feature>
<evidence type="ECO:0000255" key="1"/>
<evidence type="ECO:0000303" key="2">
    <source>
    </source>
</evidence>
<evidence type="ECO:0000303" key="3">
    <source ref="1"/>
</evidence>
<evidence type="ECO:0000305" key="4"/>
<evidence type="ECO:0000312" key="5">
    <source>
        <dbReference type="Araport" id="AT4G23030"/>
    </source>
</evidence>
<evidence type="ECO:0000312" key="6">
    <source>
        <dbReference type="EMBL" id="AAM03451.1"/>
    </source>
</evidence>
<evidence type="ECO:0000312" key="7">
    <source>
        <dbReference type="EMBL" id="CAA19819.1"/>
    </source>
</evidence>
<accession>O82752</accession>